<protein>
    <recommendedName>
        <fullName evidence="19">Protein crumbs homolog 2</fullName>
    </recommendedName>
    <alternativeName>
        <fullName>Crumbs-like protein 2</fullName>
    </alternativeName>
</protein>
<reference key="1">
    <citation type="journal article" date="2005" name="Mol. Vis.">
        <title>Characterization of the crumbs homolog 2 (CRB2) gene and analysis of its role in retinitis pigmentosa and Leber congenital amaurosis.</title>
        <authorList>
            <person name="van den Hurk J.A.J.M."/>
            <person name="Rashbass P."/>
            <person name="Roepman R."/>
            <person name="Davis J."/>
            <person name="Voesenek K.E.J."/>
            <person name="Arends M.L."/>
            <person name="Zonneveld M.N."/>
            <person name="van Roekel M.H.G."/>
            <person name="Cameron K."/>
            <person name="Rohrschneider K."/>
            <person name="Heckenlively J.R."/>
            <person name="Koenekoop R.K."/>
            <person name="Hoyng C.B."/>
            <person name="Cremers F.P.M."/>
            <person name="den Hollander A.I."/>
        </authorList>
    </citation>
    <scope>NUCLEOTIDE SEQUENCE [MRNA] (ISOFORM 1)</scope>
    <scope>TISSUE SPECIFICITY</scope>
    <scope>VARIANTS LEU-46; LEU-97; LEU-116; THR-145; ALA-159; ASP-187; THR-351; GLN-534; TRP-610; ALA-709; GLN-746 AND MET-1110</scope>
</reference>
<reference key="2">
    <citation type="journal article" date="2004" name="Nat. Genet.">
        <title>Complete sequencing and characterization of 21,243 full-length human cDNAs.</title>
        <authorList>
            <person name="Ota T."/>
            <person name="Suzuki Y."/>
            <person name="Nishikawa T."/>
            <person name="Otsuki T."/>
            <person name="Sugiyama T."/>
            <person name="Irie R."/>
            <person name="Wakamatsu A."/>
            <person name="Hayashi K."/>
            <person name="Sato H."/>
            <person name="Nagai K."/>
            <person name="Kimura K."/>
            <person name="Makita H."/>
            <person name="Sekine M."/>
            <person name="Obayashi M."/>
            <person name="Nishi T."/>
            <person name="Shibahara T."/>
            <person name="Tanaka T."/>
            <person name="Ishii S."/>
            <person name="Yamamoto J."/>
            <person name="Saito K."/>
            <person name="Kawai Y."/>
            <person name="Isono Y."/>
            <person name="Nakamura Y."/>
            <person name="Nagahari K."/>
            <person name="Murakami K."/>
            <person name="Yasuda T."/>
            <person name="Iwayanagi T."/>
            <person name="Wagatsuma M."/>
            <person name="Shiratori A."/>
            <person name="Sudo H."/>
            <person name="Hosoiri T."/>
            <person name="Kaku Y."/>
            <person name="Kodaira H."/>
            <person name="Kondo H."/>
            <person name="Sugawara M."/>
            <person name="Takahashi M."/>
            <person name="Kanda K."/>
            <person name="Yokoi T."/>
            <person name="Furuya T."/>
            <person name="Kikkawa E."/>
            <person name="Omura Y."/>
            <person name="Abe K."/>
            <person name="Kamihara K."/>
            <person name="Katsuta N."/>
            <person name="Sato K."/>
            <person name="Tanikawa M."/>
            <person name="Yamazaki M."/>
            <person name="Ninomiya K."/>
            <person name="Ishibashi T."/>
            <person name="Yamashita H."/>
            <person name="Murakawa K."/>
            <person name="Fujimori K."/>
            <person name="Tanai H."/>
            <person name="Kimata M."/>
            <person name="Watanabe M."/>
            <person name="Hiraoka S."/>
            <person name="Chiba Y."/>
            <person name="Ishida S."/>
            <person name="Ono Y."/>
            <person name="Takiguchi S."/>
            <person name="Watanabe S."/>
            <person name="Yosida M."/>
            <person name="Hotuta T."/>
            <person name="Kusano J."/>
            <person name="Kanehori K."/>
            <person name="Takahashi-Fujii A."/>
            <person name="Hara H."/>
            <person name="Tanase T.-O."/>
            <person name="Nomura Y."/>
            <person name="Togiya S."/>
            <person name="Komai F."/>
            <person name="Hara R."/>
            <person name="Takeuchi K."/>
            <person name="Arita M."/>
            <person name="Imose N."/>
            <person name="Musashino K."/>
            <person name="Yuuki H."/>
            <person name="Oshima A."/>
            <person name="Sasaki N."/>
            <person name="Aotsuka S."/>
            <person name="Yoshikawa Y."/>
            <person name="Matsunawa H."/>
            <person name="Ichihara T."/>
            <person name="Shiohata N."/>
            <person name="Sano S."/>
            <person name="Moriya S."/>
            <person name="Momiyama H."/>
            <person name="Satoh N."/>
            <person name="Takami S."/>
            <person name="Terashima Y."/>
            <person name="Suzuki O."/>
            <person name="Nakagawa S."/>
            <person name="Senoh A."/>
            <person name="Mizoguchi H."/>
            <person name="Goto Y."/>
            <person name="Shimizu F."/>
            <person name="Wakebe H."/>
            <person name="Hishigaki H."/>
            <person name="Watanabe T."/>
            <person name="Sugiyama A."/>
            <person name="Takemoto M."/>
            <person name="Kawakami B."/>
            <person name="Yamazaki M."/>
            <person name="Watanabe K."/>
            <person name="Kumagai A."/>
            <person name="Itakura S."/>
            <person name="Fukuzumi Y."/>
            <person name="Fujimori Y."/>
            <person name="Komiyama M."/>
            <person name="Tashiro H."/>
            <person name="Tanigami A."/>
            <person name="Fujiwara T."/>
            <person name="Ono T."/>
            <person name="Yamada K."/>
            <person name="Fujii Y."/>
            <person name="Ozaki K."/>
            <person name="Hirao M."/>
            <person name="Ohmori Y."/>
            <person name="Kawabata A."/>
            <person name="Hikiji T."/>
            <person name="Kobatake N."/>
            <person name="Inagaki H."/>
            <person name="Ikema Y."/>
            <person name="Okamoto S."/>
            <person name="Okitani R."/>
            <person name="Kawakami T."/>
            <person name="Noguchi S."/>
            <person name="Itoh T."/>
            <person name="Shigeta K."/>
            <person name="Senba T."/>
            <person name="Matsumura K."/>
            <person name="Nakajima Y."/>
            <person name="Mizuno T."/>
            <person name="Morinaga M."/>
            <person name="Sasaki M."/>
            <person name="Togashi T."/>
            <person name="Oyama M."/>
            <person name="Hata H."/>
            <person name="Watanabe M."/>
            <person name="Komatsu T."/>
            <person name="Mizushima-Sugano J."/>
            <person name="Satoh T."/>
            <person name="Shirai Y."/>
            <person name="Takahashi Y."/>
            <person name="Nakagawa K."/>
            <person name="Okumura K."/>
            <person name="Nagase T."/>
            <person name="Nomura N."/>
            <person name="Kikuchi H."/>
            <person name="Masuho Y."/>
            <person name="Yamashita R."/>
            <person name="Nakai K."/>
            <person name="Yada T."/>
            <person name="Nakamura Y."/>
            <person name="Ohara O."/>
            <person name="Isogai T."/>
            <person name="Sugano S."/>
        </authorList>
    </citation>
    <scope>NUCLEOTIDE SEQUENCE [LARGE SCALE MRNA] (ISOFORMS 2 AND 3)</scope>
    <scope>VARIANTS ASN-90; THR-145; ALA-159 AND ALA-709</scope>
    <source>
        <tissue>Cerebellum</tissue>
    </source>
</reference>
<reference key="3">
    <citation type="journal article" date="2004" name="Nature">
        <title>DNA sequence and analysis of human chromosome 9.</title>
        <authorList>
            <person name="Humphray S.J."/>
            <person name="Oliver K."/>
            <person name="Hunt A.R."/>
            <person name="Plumb R.W."/>
            <person name="Loveland J.E."/>
            <person name="Howe K.L."/>
            <person name="Andrews T.D."/>
            <person name="Searle S."/>
            <person name="Hunt S.E."/>
            <person name="Scott C.E."/>
            <person name="Jones M.C."/>
            <person name="Ainscough R."/>
            <person name="Almeida J.P."/>
            <person name="Ambrose K.D."/>
            <person name="Ashwell R.I.S."/>
            <person name="Babbage A.K."/>
            <person name="Babbage S."/>
            <person name="Bagguley C.L."/>
            <person name="Bailey J."/>
            <person name="Banerjee R."/>
            <person name="Barker D.J."/>
            <person name="Barlow K.F."/>
            <person name="Bates K."/>
            <person name="Beasley H."/>
            <person name="Beasley O."/>
            <person name="Bird C.P."/>
            <person name="Bray-Allen S."/>
            <person name="Brown A.J."/>
            <person name="Brown J.Y."/>
            <person name="Burford D."/>
            <person name="Burrill W."/>
            <person name="Burton J."/>
            <person name="Carder C."/>
            <person name="Carter N.P."/>
            <person name="Chapman J.C."/>
            <person name="Chen Y."/>
            <person name="Clarke G."/>
            <person name="Clark S.Y."/>
            <person name="Clee C.M."/>
            <person name="Clegg S."/>
            <person name="Collier R.E."/>
            <person name="Corby N."/>
            <person name="Crosier M."/>
            <person name="Cummings A.T."/>
            <person name="Davies J."/>
            <person name="Dhami P."/>
            <person name="Dunn M."/>
            <person name="Dutta I."/>
            <person name="Dyer L.W."/>
            <person name="Earthrowl M.E."/>
            <person name="Faulkner L."/>
            <person name="Fleming C.J."/>
            <person name="Frankish A."/>
            <person name="Frankland J.A."/>
            <person name="French L."/>
            <person name="Fricker D.G."/>
            <person name="Garner P."/>
            <person name="Garnett J."/>
            <person name="Ghori J."/>
            <person name="Gilbert J.G.R."/>
            <person name="Glison C."/>
            <person name="Grafham D.V."/>
            <person name="Gribble S."/>
            <person name="Griffiths C."/>
            <person name="Griffiths-Jones S."/>
            <person name="Grocock R."/>
            <person name="Guy J."/>
            <person name="Hall R.E."/>
            <person name="Hammond S."/>
            <person name="Harley J.L."/>
            <person name="Harrison E.S.I."/>
            <person name="Hart E.A."/>
            <person name="Heath P.D."/>
            <person name="Henderson C.D."/>
            <person name="Hopkins B.L."/>
            <person name="Howard P.J."/>
            <person name="Howden P.J."/>
            <person name="Huckle E."/>
            <person name="Johnson C."/>
            <person name="Johnson D."/>
            <person name="Joy A.A."/>
            <person name="Kay M."/>
            <person name="Keenan S."/>
            <person name="Kershaw J.K."/>
            <person name="Kimberley A.M."/>
            <person name="King A."/>
            <person name="Knights A."/>
            <person name="Laird G.K."/>
            <person name="Langford C."/>
            <person name="Lawlor S."/>
            <person name="Leongamornlert D.A."/>
            <person name="Leversha M."/>
            <person name="Lloyd C."/>
            <person name="Lloyd D.M."/>
            <person name="Lovell J."/>
            <person name="Martin S."/>
            <person name="Mashreghi-Mohammadi M."/>
            <person name="Matthews L."/>
            <person name="McLaren S."/>
            <person name="McLay K.E."/>
            <person name="McMurray A."/>
            <person name="Milne S."/>
            <person name="Nickerson T."/>
            <person name="Nisbett J."/>
            <person name="Nordsiek G."/>
            <person name="Pearce A.V."/>
            <person name="Peck A.I."/>
            <person name="Porter K.M."/>
            <person name="Pandian R."/>
            <person name="Pelan S."/>
            <person name="Phillimore B."/>
            <person name="Povey S."/>
            <person name="Ramsey Y."/>
            <person name="Rand V."/>
            <person name="Scharfe M."/>
            <person name="Sehra H.K."/>
            <person name="Shownkeen R."/>
            <person name="Sims S.K."/>
            <person name="Skuce C.D."/>
            <person name="Smith M."/>
            <person name="Steward C.A."/>
            <person name="Swarbreck D."/>
            <person name="Sycamore N."/>
            <person name="Tester J."/>
            <person name="Thorpe A."/>
            <person name="Tracey A."/>
            <person name="Tromans A."/>
            <person name="Thomas D.W."/>
            <person name="Wall M."/>
            <person name="Wallis J.M."/>
            <person name="West A.P."/>
            <person name="Whitehead S.L."/>
            <person name="Willey D.L."/>
            <person name="Williams S.A."/>
            <person name="Wilming L."/>
            <person name="Wray P.W."/>
            <person name="Young L."/>
            <person name="Ashurst J.L."/>
            <person name="Coulson A."/>
            <person name="Blocker H."/>
            <person name="Durbin R.M."/>
            <person name="Sulston J.E."/>
            <person name="Hubbard T."/>
            <person name="Jackson M.J."/>
            <person name="Bentley D.R."/>
            <person name="Beck S."/>
            <person name="Rogers J."/>
            <person name="Dunham I."/>
        </authorList>
    </citation>
    <scope>NUCLEOTIDE SEQUENCE [LARGE SCALE GENOMIC DNA]</scope>
</reference>
<reference key="4">
    <citation type="submission" date="2006-03" db="EMBL/GenBank/DDBJ databases">
        <authorList>
            <person name="Roni V."/>
            <person name="Carpio R."/>
            <person name="Wissinger B."/>
        </authorList>
    </citation>
    <scope>NUCLEOTIDE SEQUENCE [MRNA] OF 1-22</scope>
    <source>
        <tissue>Retina</tissue>
    </source>
</reference>
<reference key="5">
    <citation type="journal article" date="2007" name="Exp. Cell Res.">
        <title>FERM protein EPB41L5 is a novel member of the mammalian CRB-MPP5 polarity complex.</title>
        <authorList>
            <person name="Gosens I."/>
            <person name="Sessa A."/>
            <person name="den Hollander A.I."/>
            <person name="Letteboer S.J.F."/>
            <person name="Belloni V."/>
            <person name="Arends M.L."/>
            <person name="Le Bivic A."/>
            <person name="Cremers F.P.M."/>
            <person name="Broccoli V."/>
            <person name="Roepman R."/>
        </authorList>
    </citation>
    <scope>INTERACTION WITH EPB41L5</scope>
</reference>
<reference key="6">
    <citation type="journal article" date="2010" name="J. Biol. Chem.">
        <title>Human CRB2 inhibits gamma-secretase cleavage of amyloid precursor protein by binding to the presenilin complex.</title>
        <authorList>
            <person name="Mitsuishi Y."/>
            <person name="Hasegawa H."/>
            <person name="Matsuo A."/>
            <person name="Araki W."/>
            <person name="Suzuki T."/>
            <person name="Tagami S."/>
            <person name="Okochi M."/>
            <person name="Takeda M."/>
            <person name="Roepman R."/>
            <person name="Nishimura M."/>
        </authorList>
    </citation>
    <scope>FUNCTION</scope>
    <scope>INTERACTION WITH THE GAMMA-SECRETASE COMPLEX</scope>
    <scope>INTERACTION WITH PSEN1</scope>
    <scope>GLYCOSYLATION</scope>
    <scope>MUTAGENESIS OF TYR-1258; PRO-1260 AND GLU-1264</scope>
</reference>
<reference key="7">
    <citation type="journal article" date="2015" name="Am. J. Hum. Genet.">
        <title>Defects of CRB2 cause steroid-resistant nephrotic syndrome.</title>
        <authorList>
            <person name="Ebarasi L."/>
            <person name="Ashraf S."/>
            <person name="Bierzynska A."/>
            <person name="Gee H.Y."/>
            <person name="McCarthy H.J."/>
            <person name="Lovric S."/>
            <person name="Sadowski C.E."/>
            <person name="Pabst W."/>
            <person name="Vega-Warner V."/>
            <person name="Fang H."/>
            <person name="Koziell A."/>
            <person name="Simpson M.A."/>
            <person name="Dursun I."/>
            <person name="Serdaroglu E."/>
            <person name="Levy S."/>
            <person name="Saleem M.A."/>
            <person name="Hildebrandt F."/>
            <person name="Majumdar A."/>
        </authorList>
    </citation>
    <scope>INVOLVEMENT IN FSGS9</scope>
    <scope>VARIANTS FSGS9 SER-620; CYS-628; SER-629 AND GLN-1249</scope>
    <scope>CHARACTERIZATION OF VARIANTS FSGS9 SER-620 AND SER-629</scope>
</reference>
<reference key="8">
    <citation type="journal article" date="2015" name="Am. J. Hum. Genet.">
        <title>CRB2 mutations produce a phenotype resembling congenital nephrosis, Finnish type, with cerebral ventriculomegaly and raised alpha-fetoprotein.</title>
        <authorList>
            <person name="Slavotinek A."/>
            <person name="Kaylor J."/>
            <person name="Pierce H."/>
            <person name="Cahr M."/>
            <person name="DeWard S.J."/>
            <person name="Schneidman-Duhovny D."/>
            <person name="Alsadah A."/>
            <person name="Salem F."/>
            <person name="Schmajuk G."/>
            <person name="Mehta L."/>
        </authorList>
    </citation>
    <scope>INVOLVEMENT IN VMCKD</scope>
    <scope>VARIANTS VMCKD TRP-633; ALA-643; LYS-800 AND 760-GLY--ILE-1285 DEL</scope>
</reference>
<reference key="9">
    <citation type="journal article" date="2016" name="Clin. Genet.">
        <title>Expanding the phenotype of CRB2 mutations - A new ciliopathy syndrome?</title>
        <authorList>
            <person name="Jaron R."/>
            <person name="Rosenfeld N."/>
            <person name="Zahdeh F."/>
            <person name="Carmi S."/>
            <person name="Beni-Adani L."/>
            <person name="Doviner V."/>
            <person name="Picard E."/>
            <person name="Segel R."/>
            <person name="Zeligson S."/>
            <person name="Carmel L."/>
            <person name="Renbaum P."/>
            <person name="Levy-Lahad E."/>
        </authorList>
    </citation>
    <scope>VARIANT VMCKD LYS-800</scope>
</reference>
<reference key="10">
    <citation type="journal article" date="2016" name="Eur. J. Hum. Genet.">
        <title>Expansion of phenotype and genotypic data in CRB2-related syndrome.</title>
        <authorList>
            <person name="Lamont R.E."/>
            <person name="Tan W.H."/>
            <person name="Innes A.M."/>
            <person name="Parboosingh J.S."/>
            <person name="Schneidman-Duhovny D."/>
            <person name="Rajkovic A."/>
            <person name="Pappas J."/>
            <person name="Altschwager P."/>
            <person name="DeWard S."/>
            <person name="Fulton A."/>
            <person name="Gray K.J."/>
            <person name="Krall M."/>
            <person name="Mehta L."/>
            <person name="Rodan L.H."/>
            <person name="Saller D.N. Jr."/>
            <person name="Steele D."/>
            <person name="Stein D."/>
            <person name="Yatsenko S.A."/>
            <person name="Bernier F.P."/>
            <person name="Slavotinek A.M."/>
        </authorList>
    </citation>
    <scope>VARIANTS FSGS9 CYS-498; ALA-643; LYS-800; ALA-1076; CYS-1115 AND ARG-1129</scope>
</reference>
<reference key="11">
    <citation type="journal article" date="2017" name="Pediatr. Nephrol.">
        <title>Altered expression of Crb2 in podocytes expands a variation of CRB2 mutations in steroid-resistant nephrotic syndrome.</title>
        <authorList>
            <person name="Udagawa T."/>
            <person name="Jo T."/>
            <person name="Yanagihara T."/>
            <person name="Shimizu A."/>
            <person name="Mitsui J."/>
            <person name="Tsuji S."/>
            <person name="Morishita S."/>
            <person name="Onai R."/>
            <person name="Miura K."/>
            <person name="Kanda S."/>
            <person name="Kajiho Y."/>
            <person name="Tsurumi H."/>
            <person name="Oka A."/>
            <person name="Hattori M."/>
            <person name="Harita Y."/>
        </authorList>
    </citation>
    <scope>VARIANT FSGS9 THR-1184</scope>
    <scope>TISSUE SPECIFICITY</scope>
</reference>
<reference key="12">
    <citation type="journal article" date="2018" name="Medicine (Baltimore)">
        <title>A case report of CRB2 mutation identified in a Chinese boy with focal segmental glomerulosclerosis.</title>
        <authorList>
            <person name="Fan J."/>
            <person name="Fu R."/>
            <person name="Ren F."/>
            <person name="He J."/>
            <person name="Wang S."/>
            <person name="Gou M."/>
        </authorList>
    </citation>
    <scope>VARIANTS FSGS9 149-GLU--ILE-1285 DEL; MET-902 AND SER-1064</scope>
</reference>
<reference key="13">
    <citation type="journal article" date="2018" name="Nephrology">
        <title>Long-term clinicopathologic observation in a case of steroid-resistant nephrotic syndrome caused by a novel Crumbs homolog 2 mutation.</title>
        <authorList>
            <person name="Watanabe S."/>
            <person name="Aizawa T."/>
            <person name="Tsukaguchi H."/>
            <person name="Tsugawa K."/>
            <person name="Tsuruga K."/>
            <person name="Shono A."/>
            <person name="Nozu K."/>
            <person name="Iijima K."/>
            <person name="Joh K."/>
            <person name="Tanaka H."/>
        </authorList>
    </citation>
    <scope>VARIANTS FSGS9 CYS-628 AND TRP-839</scope>
    <scope>TISSUE SPECIFICITY</scope>
</reference>
<reference key="14">
    <citation type="journal article" date="2019" name="Exp. Eye Res.">
        <title>CRB2 mutation causes autosomal recessive retinitis pigmentosa.</title>
        <authorList>
            <person name="Chen X."/>
            <person name="Jiang C."/>
            <person name="Yang D."/>
            <person name="Sun R."/>
            <person name="Wang M."/>
            <person name="Sun H."/>
            <person name="Xu M."/>
            <person name="Zhou L."/>
            <person name="Chen M."/>
            <person name="Xie P."/>
            <person name="Yan B."/>
            <person name="Liu Q."/>
            <person name="Zhao C."/>
        </authorList>
    </citation>
    <scope>VARIANT RP GLY-1249</scope>
    <scope>CHARACTERIZATION OF VARIANT GLY-1249</scope>
</reference>
<reference key="15">
    <citation type="journal article" date="2020" name="J. Hum. Genet.">
        <title>Genetic and preimplantation diagnosis of cystic kidney disease with ventriculomegaly.</title>
        <authorList>
            <person name="Zhang L."/>
            <person name="Zhang Z."/>
            <person name="Bi X."/>
            <person name="Mao Y."/>
            <person name="Cheng Y."/>
            <person name="Zhu P."/>
            <person name="Xu S."/>
            <person name="Wang Y."/>
            <person name="Zhan X."/>
            <person name="Fan J."/>
            <person name="Yuan Y."/>
            <person name="Bi H."/>
            <person name="Wu X."/>
        </authorList>
    </citation>
    <scope>VARIANT VMCKD PRO-654</scope>
</reference>
<reference key="16">
    <citation type="submission" date="2009-08" db="PDB data bank">
        <title>The crystal structure of the human dual specificity tyrosine-phosphorylation-regulated kinase 1A.</title>
        <authorList>
            <consortium name="Structural genomics consortium (SGC)"/>
        </authorList>
    </citation>
    <scope>X-RAY CRYSTALLOGRAPHY (2.5 ANGSTROMS) OF 4-9 IN COMPLEX WITH DYRK1A</scope>
</reference>
<gene>
    <name evidence="20" type="primary">CRB2</name>
</gene>
<keyword id="KW-0002">3D-structure</keyword>
<keyword id="KW-0025">Alternative splicing</keyword>
<keyword id="KW-0106">Calcium</keyword>
<keyword id="KW-0965">Cell junction</keyword>
<keyword id="KW-1003">Cell membrane</keyword>
<keyword id="KW-0963">Cytoplasm</keyword>
<keyword id="KW-0217">Developmental protein</keyword>
<keyword id="KW-0225">Disease variant</keyword>
<keyword id="KW-1015">Disulfide bond</keyword>
<keyword id="KW-0245">EGF-like domain</keyword>
<keyword id="KW-0306">Gastrulation</keyword>
<keyword id="KW-0325">Glycoprotein</keyword>
<keyword id="KW-0472">Membrane</keyword>
<keyword id="KW-1267">Proteomics identification</keyword>
<keyword id="KW-1185">Reference proteome</keyword>
<keyword id="KW-0677">Repeat</keyword>
<keyword id="KW-0682">Retinitis pigmentosa</keyword>
<keyword id="KW-0964">Secreted</keyword>
<keyword id="KW-0716">Sensory transduction</keyword>
<keyword id="KW-0732">Signal</keyword>
<keyword id="KW-0812">Transmembrane</keyword>
<keyword id="KW-1133">Transmembrane helix</keyword>
<keyword id="KW-0844">Vision</keyword>
<dbReference type="EMBL" id="AY720432">
    <property type="protein sequence ID" value="AAU14134.1"/>
    <property type="molecule type" value="mRNA"/>
</dbReference>
<dbReference type="EMBL" id="AK123000">
    <property type="status" value="NOT_ANNOTATED_CDS"/>
    <property type="molecule type" value="mRNA"/>
</dbReference>
<dbReference type="EMBL" id="AK126775">
    <property type="protein sequence ID" value="BAC86684.1"/>
    <property type="molecule type" value="mRNA"/>
</dbReference>
<dbReference type="EMBL" id="AL445489">
    <property type="status" value="NOT_ANNOTATED_CDS"/>
    <property type="molecule type" value="Genomic_DNA"/>
</dbReference>
<dbReference type="EMBL" id="AL365504">
    <property type="status" value="NOT_ANNOTATED_CDS"/>
    <property type="molecule type" value="Genomic_DNA"/>
</dbReference>
<dbReference type="EMBL" id="DQ426866">
    <property type="protein sequence ID" value="ABD90532.1"/>
    <property type="molecule type" value="mRNA"/>
</dbReference>
<dbReference type="CCDS" id="CCDS6852.2">
    <molecule id="Q5IJ48-1"/>
</dbReference>
<dbReference type="RefSeq" id="NP_775960.4">
    <molecule id="Q5IJ48-1"/>
    <property type="nucleotide sequence ID" value="NM_173689.6"/>
</dbReference>
<dbReference type="RefSeq" id="XP_005251991.1">
    <molecule id="Q5IJ48-3"/>
    <property type="nucleotide sequence ID" value="XM_005251934.4"/>
</dbReference>
<dbReference type="PDB" id="2WO6">
    <property type="method" value="X-ray"/>
    <property type="resolution" value="2.50 A"/>
    <property type="chains" value="C=4-9"/>
</dbReference>
<dbReference type="PDBsum" id="2WO6"/>
<dbReference type="SMR" id="Q5IJ48"/>
<dbReference type="BioGRID" id="130332">
    <property type="interactions" value="4"/>
</dbReference>
<dbReference type="ComplexPortal" id="CPX-6180">
    <property type="entry name" value="CRUMBS2-PALS1-PATJ cell polarity complex"/>
</dbReference>
<dbReference type="FunCoup" id="Q5IJ48">
    <property type="interactions" value="163"/>
</dbReference>
<dbReference type="IntAct" id="Q5IJ48">
    <property type="interactions" value="2"/>
</dbReference>
<dbReference type="STRING" id="9606.ENSP00000362734"/>
<dbReference type="TCDB" id="9.B.87.1.30">
    <property type="family name" value="the selenoprotein p receptor (selp-receptor) family"/>
</dbReference>
<dbReference type="GlyConnect" id="2063">
    <property type="glycosylation" value="1 N-Linked glycan (1 site)"/>
</dbReference>
<dbReference type="GlyCosmos" id="Q5IJ48">
    <property type="glycosylation" value="15 sites, 3 glycans"/>
</dbReference>
<dbReference type="GlyGen" id="Q5IJ48">
    <property type="glycosylation" value="17 sites, 5 N-linked glycans (2 sites), 1 O-linked glycan (1 site)"/>
</dbReference>
<dbReference type="iPTMnet" id="Q5IJ48"/>
<dbReference type="PhosphoSitePlus" id="Q5IJ48"/>
<dbReference type="BioMuta" id="CRB2"/>
<dbReference type="DMDM" id="116241316"/>
<dbReference type="MassIVE" id="Q5IJ48"/>
<dbReference type="PaxDb" id="9606-ENSP00000362734"/>
<dbReference type="PeptideAtlas" id="Q5IJ48"/>
<dbReference type="ProteomicsDB" id="62975">
    <molecule id="Q5IJ48-1"/>
</dbReference>
<dbReference type="ProteomicsDB" id="62976">
    <molecule id="Q5IJ48-2"/>
</dbReference>
<dbReference type="ProteomicsDB" id="62977">
    <molecule id="Q5IJ48-3"/>
</dbReference>
<dbReference type="Antibodypedia" id="48144">
    <property type="antibodies" value="121 antibodies from 21 providers"/>
</dbReference>
<dbReference type="DNASU" id="286204"/>
<dbReference type="Ensembl" id="ENST00000359999.7">
    <molecule id="Q5IJ48-2"/>
    <property type="protein sequence ID" value="ENSP00000353092.3"/>
    <property type="gene ID" value="ENSG00000148204.12"/>
</dbReference>
<dbReference type="Ensembl" id="ENST00000373631.8">
    <molecule id="Q5IJ48-1"/>
    <property type="protein sequence ID" value="ENSP00000362734.3"/>
    <property type="gene ID" value="ENSG00000148204.12"/>
</dbReference>
<dbReference type="Ensembl" id="ENST00000460253.1">
    <molecule id="Q5IJ48-3"/>
    <property type="protein sequence ID" value="ENSP00000435279.1"/>
    <property type="gene ID" value="ENSG00000148204.12"/>
</dbReference>
<dbReference type="GeneID" id="286204"/>
<dbReference type="KEGG" id="hsa:286204"/>
<dbReference type="MANE-Select" id="ENST00000373631.8">
    <property type="protein sequence ID" value="ENSP00000362734.3"/>
    <property type="RefSeq nucleotide sequence ID" value="NM_173689.7"/>
    <property type="RefSeq protein sequence ID" value="NP_775960.4"/>
</dbReference>
<dbReference type="UCSC" id="uc004bnw.3">
    <molecule id="Q5IJ48-1"/>
    <property type="organism name" value="human"/>
</dbReference>
<dbReference type="AGR" id="HGNC:18688"/>
<dbReference type="CTD" id="286204"/>
<dbReference type="DisGeNET" id="286204"/>
<dbReference type="GeneCards" id="CRB2"/>
<dbReference type="HGNC" id="HGNC:18688">
    <property type="gene designation" value="CRB2"/>
</dbReference>
<dbReference type="HPA" id="ENSG00000148204">
    <property type="expression patterns" value="Tissue enhanced (brain, kidney, retina)"/>
</dbReference>
<dbReference type="MalaCards" id="CRB2"/>
<dbReference type="MIM" id="219730">
    <property type="type" value="phenotype"/>
</dbReference>
<dbReference type="MIM" id="268000">
    <property type="type" value="phenotype"/>
</dbReference>
<dbReference type="MIM" id="609720">
    <property type="type" value="gene"/>
</dbReference>
<dbReference type="MIM" id="616220">
    <property type="type" value="phenotype"/>
</dbReference>
<dbReference type="neXtProt" id="NX_Q5IJ48"/>
<dbReference type="OpenTargets" id="ENSG00000148204"/>
<dbReference type="Orphanet" id="656">
    <property type="disease" value="Hereditary steroid-resistant nephrotic syndrome"/>
</dbReference>
<dbReference type="Orphanet" id="443988">
    <property type="disease" value="Ventriculomegaly-cystic kidney disease"/>
</dbReference>
<dbReference type="PharmGKB" id="PA134910460"/>
<dbReference type="VEuPathDB" id="HostDB:ENSG00000148204"/>
<dbReference type="eggNOG" id="KOG1217">
    <property type="taxonomic scope" value="Eukaryota"/>
</dbReference>
<dbReference type="GeneTree" id="ENSGT00950000183101"/>
<dbReference type="HOGENOM" id="CLU_000827_2_2_1"/>
<dbReference type="InParanoid" id="Q5IJ48"/>
<dbReference type="OMA" id="CLCWPGF"/>
<dbReference type="OrthoDB" id="283575at2759"/>
<dbReference type="PAN-GO" id="Q5IJ48">
    <property type="GO annotations" value="4 GO annotations based on evolutionary models"/>
</dbReference>
<dbReference type="PhylomeDB" id="Q5IJ48"/>
<dbReference type="TreeFam" id="TF316224"/>
<dbReference type="PathwayCommons" id="Q5IJ48"/>
<dbReference type="SignaLink" id="Q5IJ48"/>
<dbReference type="BioGRID-ORCS" id="286204">
    <property type="hits" value="15 hits in 1146 CRISPR screens"/>
</dbReference>
<dbReference type="EvolutionaryTrace" id="Q5IJ48"/>
<dbReference type="GenomeRNAi" id="286204"/>
<dbReference type="Pharos" id="Q5IJ48">
    <property type="development level" value="Tbio"/>
</dbReference>
<dbReference type="PRO" id="PR:Q5IJ48"/>
<dbReference type="Proteomes" id="UP000005640">
    <property type="component" value="Chromosome 9"/>
</dbReference>
<dbReference type="RNAct" id="Q5IJ48">
    <property type="molecule type" value="protein"/>
</dbReference>
<dbReference type="Bgee" id="ENSG00000148204">
    <property type="expression patterns" value="Expressed in ventricular zone and 69 other cell types or tissues"/>
</dbReference>
<dbReference type="GO" id="GO:0043296">
    <property type="term" value="C:apical junction complex"/>
    <property type="evidence" value="ECO:0000303"/>
    <property type="project" value="ComplexPortal"/>
</dbReference>
<dbReference type="GO" id="GO:0016324">
    <property type="term" value="C:apical plasma membrane"/>
    <property type="evidence" value="ECO:0000250"/>
    <property type="project" value="UniProtKB"/>
</dbReference>
<dbReference type="GO" id="GO:0016327">
    <property type="term" value="C:apicolateral plasma membrane"/>
    <property type="evidence" value="ECO:0007669"/>
    <property type="project" value="Ensembl"/>
</dbReference>
<dbReference type="GO" id="GO:0005737">
    <property type="term" value="C:cytoplasm"/>
    <property type="evidence" value="ECO:0007669"/>
    <property type="project" value="UniProtKB-SubCell"/>
</dbReference>
<dbReference type="GO" id="GO:0070062">
    <property type="term" value="C:extracellular exosome"/>
    <property type="evidence" value="ECO:0007005"/>
    <property type="project" value="UniProtKB"/>
</dbReference>
<dbReference type="GO" id="GO:0005886">
    <property type="term" value="C:plasma membrane"/>
    <property type="evidence" value="ECO:0000318"/>
    <property type="project" value="GO_Central"/>
</dbReference>
<dbReference type="GO" id="GO:0032991">
    <property type="term" value="C:protein-containing complex"/>
    <property type="evidence" value="ECO:0000314"/>
    <property type="project" value="UniProtKB"/>
</dbReference>
<dbReference type="GO" id="GO:0035003">
    <property type="term" value="C:subapical complex"/>
    <property type="evidence" value="ECO:0007669"/>
    <property type="project" value="Ensembl"/>
</dbReference>
<dbReference type="GO" id="GO:0019828">
    <property type="term" value="F:aspartic-type endopeptidase inhibitor activity"/>
    <property type="evidence" value="ECO:0000315"/>
    <property type="project" value="UniProtKB"/>
</dbReference>
<dbReference type="GO" id="GO:0005509">
    <property type="term" value="F:calcium ion binding"/>
    <property type="evidence" value="ECO:0007669"/>
    <property type="project" value="InterPro"/>
</dbReference>
<dbReference type="GO" id="GO:0044877">
    <property type="term" value="F:protein-containing complex binding"/>
    <property type="evidence" value="ECO:0000315"/>
    <property type="project" value="UniProtKB"/>
</dbReference>
<dbReference type="GO" id="GO:0072359">
    <property type="term" value="P:circulatory system development"/>
    <property type="evidence" value="ECO:0000250"/>
    <property type="project" value="CAFA"/>
</dbReference>
<dbReference type="GO" id="GO:0030010">
    <property type="term" value="P:establishment of cell polarity"/>
    <property type="evidence" value="ECO:0000250"/>
    <property type="project" value="UniProtKB"/>
</dbReference>
<dbReference type="GO" id="GO:0045197">
    <property type="term" value="P:establishment or maintenance of epithelial cell apical/basal polarity"/>
    <property type="evidence" value="ECO:0000318"/>
    <property type="project" value="GO_Central"/>
</dbReference>
<dbReference type="GO" id="GO:0007157">
    <property type="term" value="P:heterophilic cell-cell adhesion via plasma membrane cell adhesion molecules"/>
    <property type="evidence" value="ECO:0000318"/>
    <property type="project" value="GO_Central"/>
</dbReference>
<dbReference type="GO" id="GO:0055111">
    <property type="term" value="P:ingression involved in gastrulation with mouth forming second"/>
    <property type="evidence" value="ECO:0000250"/>
    <property type="project" value="UniProtKB"/>
</dbReference>
<dbReference type="GO" id="GO:0045199">
    <property type="term" value="P:maintenance of epithelial cell apical/basal polarity"/>
    <property type="evidence" value="ECO:0000250"/>
    <property type="project" value="CAFA"/>
</dbReference>
<dbReference type="GO" id="GO:0001707">
    <property type="term" value="P:mesoderm formation"/>
    <property type="evidence" value="ECO:0000250"/>
    <property type="project" value="CAFA"/>
</dbReference>
<dbReference type="GO" id="GO:0010951">
    <property type="term" value="P:negative regulation of endopeptidase activity"/>
    <property type="evidence" value="ECO:0000315"/>
    <property type="project" value="UniProtKB"/>
</dbReference>
<dbReference type="GO" id="GO:0014028">
    <property type="term" value="P:notochord formation"/>
    <property type="evidence" value="ECO:0000250"/>
    <property type="project" value="CAFA"/>
</dbReference>
<dbReference type="GO" id="GO:0045494">
    <property type="term" value="P:photoreceptor cell maintenance"/>
    <property type="evidence" value="ECO:0000250"/>
    <property type="project" value="UniProtKB"/>
</dbReference>
<dbReference type="GO" id="GO:0030513">
    <property type="term" value="P:positive regulation of BMP signaling pathway"/>
    <property type="evidence" value="ECO:0000250"/>
    <property type="project" value="CAFA"/>
</dbReference>
<dbReference type="GO" id="GO:0010718">
    <property type="term" value="P:positive regulation of epithelial to mesenchymal transition"/>
    <property type="evidence" value="ECO:0000250"/>
    <property type="project" value="UniProtKB"/>
</dbReference>
<dbReference type="GO" id="GO:0010470">
    <property type="term" value="P:regulation of gastrulation"/>
    <property type="evidence" value="ECO:0000250"/>
    <property type="project" value="UniProtKB"/>
</dbReference>
<dbReference type="GO" id="GO:0001895">
    <property type="term" value="P:retina homeostasis"/>
    <property type="evidence" value="ECO:0000250"/>
    <property type="project" value="UniProtKB"/>
</dbReference>
<dbReference type="GO" id="GO:0046549">
    <property type="term" value="P:retinal cone cell development"/>
    <property type="evidence" value="ECO:0000250"/>
    <property type="project" value="UniProtKB"/>
</dbReference>
<dbReference type="GO" id="GO:0001756">
    <property type="term" value="P:somitogenesis"/>
    <property type="evidence" value="ECO:0000250"/>
    <property type="project" value="CAFA"/>
</dbReference>
<dbReference type="GO" id="GO:0007601">
    <property type="term" value="P:visual perception"/>
    <property type="evidence" value="ECO:0007669"/>
    <property type="project" value="UniProtKB-KW"/>
</dbReference>
<dbReference type="CDD" id="cd00054">
    <property type="entry name" value="EGF_CA"/>
    <property type="match status" value="11"/>
</dbReference>
<dbReference type="CDD" id="cd00110">
    <property type="entry name" value="LamG"/>
    <property type="match status" value="3"/>
</dbReference>
<dbReference type="FunFam" id="2.10.25.10:FF:000208">
    <property type="entry name" value="Crumbs 2, cell polarity complex component"/>
    <property type="match status" value="1"/>
</dbReference>
<dbReference type="FunFam" id="2.10.25.10:FF:000501">
    <property type="entry name" value="Crumbs 2, cell polarity complex component"/>
    <property type="match status" value="1"/>
</dbReference>
<dbReference type="FunFam" id="2.10.25.10:FF:000530">
    <property type="entry name" value="Crumbs 2, cell polarity complex component"/>
    <property type="match status" value="1"/>
</dbReference>
<dbReference type="FunFam" id="2.10.25.10:FF:000559">
    <property type="entry name" value="Crumbs 2, cell polarity complex component"/>
    <property type="match status" value="1"/>
</dbReference>
<dbReference type="FunFam" id="2.60.120.200:FF:000130">
    <property type="entry name" value="Crumbs 2, cell polarity complex component"/>
    <property type="match status" value="1"/>
</dbReference>
<dbReference type="FunFam" id="2.10.25.10:FF:000039">
    <property type="entry name" value="Crumbs cell polarity complex component 1"/>
    <property type="match status" value="1"/>
</dbReference>
<dbReference type="FunFam" id="2.10.25.10:FF:000142">
    <property type="entry name" value="Crumbs cell polarity complex component 2"/>
    <property type="match status" value="1"/>
</dbReference>
<dbReference type="FunFam" id="2.10.25.10:FF:000282">
    <property type="entry name" value="Crumbs cell polarity complex component 2"/>
    <property type="match status" value="1"/>
</dbReference>
<dbReference type="FunFam" id="2.10.25.10:FF:000339">
    <property type="entry name" value="Crumbs cell polarity complex component 2"/>
    <property type="match status" value="1"/>
</dbReference>
<dbReference type="FunFam" id="2.10.25.10:FF:000411">
    <property type="entry name" value="Crumbs cell polarity complex component 2"/>
    <property type="match status" value="1"/>
</dbReference>
<dbReference type="FunFam" id="2.10.25.10:FF:000605">
    <property type="entry name" value="Crumbs cell polarity complex component 2"/>
    <property type="match status" value="1"/>
</dbReference>
<dbReference type="FunFam" id="2.60.120.200:FF:000194">
    <property type="entry name" value="Crumbs cell polarity complex component 2"/>
    <property type="match status" value="1"/>
</dbReference>
<dbReference type="FunFam" id="2.60.120.200:FF:000204">
    <property type="entry name" value="Crumbs cell polarity complex component 2"/>
    <property type="match status" value="1"/>
</dbReference>
<dbReference type="FunFam" id="2.10.25.10:FF:000109">
    <property type="entry name" value="Notch homolog 4, [Drosophila]"/>
    <property type="match status" value="1"/>
</dbReference>
<dbReference type="FunFam" id="2.10.25.10:FF:000122">
    <property type="entry name" value="Protein crumbs homolog 2"/>
    <property type="match status" value="1"/>
</dbReference>
<dbReference type="Gene3D" id="2.60.120.200">
    <property type="match status" value="3"/>
</dbReference>
<dbReference type="Gene3D" id="2.10.25.10">
    <property type="entry name" value="Laminin"/>
    <property type="match status" value="14"/>
</dbReference>
<dbReference type="InterPro" id="IPR013320">
    <property type="entry name" value="ConA-like_dom_sf"/>
</dbReference>
<dbReference type="InterPro" id="IPR001881">
    <property type="entry name" value="EGF-like_Ca-bd_dom"/>
</dbReference>
<dbReference type="InterPro" id="IPR013032">
    <property type="entry name" value="EGF-like_CS"/>
</dbReference>
<dbReference type="InterPro" id="IPR000742">
    <property type="entry name" value="EGF-like_dom"/>
</dbReference>
<dbReference type="InterPro" id="IPR000152">
    <property type="entry name" value="EGF-type_Asp/Asn_hydroxyl_site"/>
</dbReference>
<dbReference type="InterPro" id="IPR018097">
    <property type="entry name" value="EGF_Ca-bd_CS"/>
</dbReference>
<dbReference type="InterPro" id="IPR001791">
    <property type="entry name" value="Laminin_G"/>
</dbReference>
<dbReference type="PANTHER" id="PTHR12916">
    <property type="entry name" value="CYTOCHROME C OXIDASE POLYPEPTIDE VIC-2"/>
    <property type="match status" value="1"/>
</dbReference>
<dbReference type="PANTHER" id="PTHR12916:SF9">
    <property type="entry name" value="NEUROGENIC LOCUS NOTCH HOMOLOG PROTEIN 1-RELATED"/>
    <property type="match status" value="1"/>
</dbReference>
<dbReference type="Pfam" id="PF00008">
    <property type="entry name" value="EGF"/>
    <property type="match status" value="9"/>
</dbReference>
<dbReference type="Pfam" id="PF12661">
    <property type="entry name" value="hEGF"/>
    <property type="match status" value="2"/>
</dbReference>
<dbReference type="Pfam" id="PF02210">
    <property type="entry name" value="Laminin_G_2"/>
    <property type="match status" value="1"/>
</dbReference>
<dbReference type="PRINTS" id="PR00010">
    <property type="entry name" value="EGFBLOOD"/>
</dbReference>
<dbReference type="SMART" id="SM00181">
    <property type="entry name" value="EGF"/>
    <property type="match status" value="15"/>
</dbReference>
<dbReference type="SMART" id="SM00179">
    <property type="entry name" value="EGF_CA"/>
    <property type="match status" value="12"/>
</dbReference>
<dbReference type="SMART" id="SM00282">
    <property type="entry name" value="LamG"/>
    <property type="match status" value="3"/>
</dbReference>
<dbReference type="SUPFAM" id="SSF49899">
    <property type="entry name" value="Concanavalin A-like lectins/glucanases"/>
    <property type="match status" value="3"/>
</dbReference>
<dbReference type="SUPFAM" id="SSF57196">
    <property type="entry name" value="EGF/Laminin"/>
    <property type="match status" value="11"/>
</dbReference>
<dbReference type="PROSITE" id="PS00010">
    <property type="entry name" value="ASX_HYDROXYL"/>
    <property type="match status" value="7"/>
</dbReference>
<dbReference type="PROSITE" id="PS00022">
    <property type="entry name" value="EGF_1"/>
    <property type="match status" value="14"/>
</dbReference>
<dbReference type="PROSITE" id="PS01186">
    <property type="entry name" value="EGF_2"/>
    <property type="match status" value="8"/>
</dbReference>
<dbReference type="PROSITE" id="PS50026">
    <property type="entry name" value="EGF_3"/>
    <property type="match status" value="15"/>
</dbReference>
<dbReference type="PROSITE" id="PS01187">
    <property type="entry name" value="EGF_CA"/>
    <property type="match status" value="5"/>
</dbReference>
<dbReference type="PROSITE" id="PS50025">
    <property type="entry name" value="LAM_G_DOMAIN"/>
    <property type="match status" value="2"/>
</dbReference>
<organism>
    <name type="scientific">Homo sapiens</name>
    <name type="common">Human</name>
    <dbReference type="NCBI Taxonomy" id="9606"/>
    <lineage>
        <taxon>Eukaryota</taxon>
        <taxon>Metazoa</taxon>
        <taxon>Chordata</taxon>
        <taxon>Craniata</taxon>
        <taxon>Vertebrata</taxon>
        <taxon>Euteleostomi</taxon>
        <taxon>Mammalia</taxon>
        <taxon>Eutheria</taxon>
        <taxon>Euarchontoglires</taxon>
        <taxon>Primates</taxon>
        <taxon>Haplorrhini</taxon>
        <taxon>Catarrhini</taxon>
        <taxon>Hominidae</taxon>
        <taxon>Homo</taxon>
    </lineage>
</organism>
<evidence type="ECO:0000250" key="1">
    <source>
        <dbReference type="UniProtKB" id="Q80YA8"/>
    </source>
</evidence>
<evidence type="ECO:0000255" key="2"/>
<evidence type="ECO:0000255" key="3">
    <source>
        <dbReference type="PROSITE-ProRule" id="PRU00076"/>
    </source>
</evidence>
<evidence type="ECO:0000255" key="4">
    <source>
        <dbReference type="PROSITE-ProRule" id="PRU00122"/>
    </source>
</evidence>
<evidence type="ECO:0000269" key="5">
    <source>
    </source>
</evidence>
<evidence type="ECO:0000269" key="6">
    <source>
    </source>
</evidence>
<evidence type="ECO:0000269" key="7">
    <source>
    </source>
</evidence>
<evidence type="ECO:0000269" key="8">
    <source>
    </source>
</evidence>
<evidence type="ECO:0000269" key="9">
    <source>
    </source>
</evidence>
<evidence type="ECO:0000269" key="10">
    <source>
    </source>
</evidence>
<evidence type="ECO:0000269" key="11">
    <source>
    </source>
</evidence>
<evidence type="ECO:0000269" key="12">
    <source>
    </source>
</evidence>
<evidence type="ECO:0000269" key="13">
    <source>
    </source>
</evidence>
<evidence type="ECO:0000269" key="14">
    <source>
    </source>
</evidence>
<evidence type="ECO:0000269" key="15">
    <source>
    </source>
</evidence>
<evidence type="ECO:0000269" key="16">
    <source>
    </source>
</evidence>
<evidence type="ECO:0000269" key="17">
    <source>
    </source>
</evidence>
<evidence type="ECO:0000303" key="18">
    <source>
    </source>
</evidence>
<evidence type="ECO:0000305" key="19"/>
<evidence type="ECO:0000312" key="20">
    <source>
        <dbReference type="HGNC" id="HGNC:18688"/>
    </source>
</evidence>
<comment type="function">
    <text evidence="1 8">Apical polarity protein that plays a central role during the epithelial-to-mesenchymal transition (EMT) at gastrulation, when newly specified mesodermal cells move inside the embryo (By similarity). Acts by promoting cell ingression, the process by which cells leave the epithelial epiblast and move inside the embryo to form a new tissue layer (By similarity). The anisotropic distribution of CRB2 and MYH10/myosin-IIB at cell edges define which cells will ingress: cells with high apical CRB2 are probably extruded from the epiblast by neighboring cells with high levels of apical MYH10/myosin-IIB (By similarity). Plays a role in the maintenance of retinal neuroepithelium organization, structural integrity, adhesion, photoreceptor polarity and retinal photoreceptor layer thickness (By similarity). May play a role in determining the length of cone photoreceptor outer segments and proliferation of late-born progenitor cells (By similarity). Also required for maintenance of the apical polarity complex during development of the cortex (By similarity). Inhibits gamma-secretase-dependent cleavage of APP and secretion of amyloid-beta peptide 40 and amyloid-beta peptide 42, and thereby inhibits gamma-secretase-dependent Notch transcription (PubMed:20299451).</text>
</comment>
<comment type="subunit">
    <text evidence="1 7 8">Associates with the gamma-secretase complex via interaction (via the transmembrane domain) with PSEN1/PS1 (PubMed:20299451). Interacts (via intracellular domain) with EPB41L5 (PubMed:17920587). Interacts with PALS1 (By similarity).</text>
</comment>
<comment type="subcellular location">
    <molecule>Isoform 1</molecule>
    <subcellularLocation>
        <location evidence="1">Apical cell membrane</location>
        <topology evidence="2">Single-pass type I membrane protein</topology>
    </subcellularLocation>
    <subcellularLocation>
        <location evidence="1">Cytoplasm</location>
    </subcellularLocation>
    <subcellularLocation>
        <location evidence="1">Cell junction</location>
    </subcellularLocation>
    <text evidence="1">O-glucosylation is required for localization at the apical plasma membrane (By similarity). Distributed in a complex anisotropic pattern on apical cell edges: the level of CRB2 on a cell edge is inversely correlated with the level of MYH10/myosin-IIB (By similarity).</text>
</comment>
<comment type="subcellular location">
    <molecule>Isoform 2</molecule>
    <subcellularLocation>
        <location evidence="2">Secreted</location>
    </subcellularLocation>
</comment>
<comment type="alternative products">
    <event type="alternative splicing"/>
    <isoform>
        <id>Q5IJ48-1</id>
        <name>1</name>
        <sequence type="displayed"/>
    </isoform>
    <isoform>
        <id>Q5IJ48-2</id>
        <name>2</name>
        <sequence type="described" ref="VSP_014739 VSP_014740"/>
    </isoform>
    <isoform>
        <id>Q5IJ48-3</id>
        <name>3</name>
        <sequence type="described" ref="VSP_014737 VSP_014738"/>
    </isoform>
</comment>
<comment type="tissue specificity">
    <text evidence="6 13 14">Expressed in glomeruli, podocytes of the glomerular capillary loops, and parietal glomerular epithelial cells in the kidney (at protein level) (PubMed:27942854, PubMed:29473663). Expressed in retina, fetal eye and brain (PubMed:15851977). Also expressed in kidney, RPE/choroid, and at low levels in lung, placenta, and heart (PubMed:15851977).</text>
</comment>
<comment type="PTM">
    <text evidence="1">O-glucosylated by POGLUT1 at Ser-267; consists of an O-glucose trisaccharide, in which the O-glucose is elongated by the addition of two xylose residues. O-glucosylation is required for localization at the plasma membrane.</text>
</comment>
<comment type="PTM">
    <text evidence="8">N-glycosylated.</text>
</comment>
<comment type="disease" evidence="9 12 13 14 15">
    <disease id="DI-04326">
        <name>Focal segmental glomerulosclerosis 9</name>
        <acronym>FSGS9</acronym>
        <description>A renal pathology defined by the presence of segmental sclerosis in glomeruli and resulting in proteinuria, reduced glomerular filtration rate and progressive decline in renal function. Renal insufficiency often progresses to end-stage renal disease, a highly morbid state requiring either dialysis therapy or kidney transplantation.</description>
        <dbReference type="MIM" id="616220"/>
    </disease>
    <text>The disease is caused by variants affecting the gene represented in this entry.</text>
</comment>
<comment type="disease" evidence="16">
    <disease id="DI-00969">
        <name>Retinitis pigmentosa</name>
        <acronym>RP</acronym>
        <description>A retinal dystrophy belonging to the group of pigmentary retinopathies. Retinitis pigmentosa is characterized by retinal pigment deposits visible on fundus examination and primary loss of rod photoreceptor cells followed by secondary loss of cone photoreceptors. Patients typically have night vision blindness and loss of midperipheral visual field. As their condition progresses, they lose their far peripheral visual field and eventually central vision as well. Retinitis pigmentosa can be inherited as an autosomal dominant, autosomal recessive or X-linked condition.</description>
        <dbReference type="MIM" id="268000"/>
    </disease>
    <text>Disease susceptibility may be associated with variants affecting the gene represented in this entry.</text>
</comment>
<comment type="disease" evidence="10 11 17">
    <disease id="DI-04346">
        <name>Ventriculomegaly with cystic kidney disease</name>
        <acronym>VMCKD</acronym>
        <description>A severe autosomal recessive developmental disorder manifesting in utero. It is characterized by cerebral ventriculomegaly, echogenic kidneys, microscopic renal tubular cysts and findings of congenital nephrosis.</description>
        <dbReference type="MIM" id="219730"/>
    </disease>
    <text>The disease is caused by variants affecting the gene represented in this entry.</text>
</comment>
<comment type="similarity">
    <text evidence="19">Belongs to the Crumbs protein family.</text>
</comment>
<name>CRUM2_HUMAN</name>
<sequence>MALARPGTPDPQALASVLLLLLWAPALSLLAGTVPSEPPSACASDPCAPGTECQATESGGYTCGPMEPRGCATQPCHHGALCVPQGPDPTGFRCYCVPGFQGPRCELDIDECASRPCHHGATCRNLADRYECHCPLGYAGVTCEMEVDECASAPCLHGGSCLDGVGSFRCVCAPGYGGTRCQLDLDECQSQPCAHGGTCHDLVNGFRCDCAGTGYEGTHCEREVLECASAPCEHNASCLEGLGSFRCLCWPGYSGELCEVDEDECASSPCQHGGRCLQRSDPALYGGVQAAFPGAFSFRHAAGFLCHCPPGFEGADCGVEVDECASRPCLNGGHCQDLPNGFQCHCPDGYAGPTCEEDVDECLSDPCLHGGTCSDTVAGYICRCPETWGGRDCSVQLTGCQGHTCPLAATCIPIFESGVHSYVCHCPPGTHGPFCGQNTTFSVMAGSPIQASVPAGGPLGLALRFRTTLPAGTLATRNDTKESLELALVAATLQATLWSYSTTVLVLRLPDLALNDGHWHQVEVVLHLATLELRLWHEGCPARLCVASGPVALASTASATPLPAGISSAQLGDATFAGCLQDVRVDGHLLLPEDLGENVLLGCERREQCRPLPCVHGGSCVDLWTHFRCDCARPHRGPTCADEIPAATFGLGGAPSSASFLLQELPGPNLTVSFLLRTRESAGLLLQFANDSAAGLTVFLSEGRIRAEVPGSPAVVLPGRWDDGLRHLVMLSFGPDQLQDLGQHVHVGGRLLAADSQPWGGPFRGCLQDLRLDGCHLPFFPLPLDNSSQPSELGGRQSWNLTAGCVSEDMCSPDPCFNGGTCLVTWNDFHCTCPANFTGPTCAQQLWCPGQPCLPPATCEEVPDGFVCVAEATFREGPPAAFSGHNASSGRLLGGLSLAFRTRDSEAWLLRAAAGALEGVWLAVRNGSLAGGVRGGHGLPGAVLPIPGPRVADGAWHRVRLAMERPAATTSRWLLWLDGAATPVALRGLASDLGFLQGPGAVRILLAENFTGCLGRVALGGLPLPLARPRPGAAPGAREHFASWPGTPAPILGCRGAPVCAPSPCLHDGACRDLFDAFACACGPGWEGPRCEAHVDPCHSAPCARGRCHTHPDGRFECRCPPGFGGPRCRLPVPSKECSLNVTCLDGSPCEGGSPAANCSCLEGLAGQRCQVPTLPCEANPCLNGGTCRAAGGVSECICNARFSGQFCEVAKGLPLPLPFPLLEVAVPAACACLLLLLLGLLSGILAARKRRQSEGTYSPSQQEVAGARLEMDSVLKVPPEERLI</sequence>
<proteinExistence type="evidence at protein level"/>
<accession>Q5IJ48</accession>
<accession>A2A3N4</accession>
<accession>Q0QD46</accession>
<accession>Q5JS41</accession>
<accession>Q5JS43</accession>
<accession>Q6ZTA9</accession>
<accession>Q6ZWI6</accession>
<feature type="signal peptide" evidence="2">
    <location>
        <begin position="1"/>
        <end position="28"/>
    </location>
</feature>
<feature type="chain" id="PRO_0000007502" description="Protein crumbs homolog 2" evidence="2">
    <location>
        <begin position="29"/>
        <end position="1285"/>
    </location>
</feature>
<feature type="transmembrane region" description="Helical" evidence="2">
    <location>
        <begin position="1225"/>
        <end position="1245"/>
    </location>
</feature>
<feature type="domain" description="EGF-like 1" evidence="3">
    <location>
        <begin position="67"/>
        <end position="106"/>
    </location>
</feature>
<feature type="domain" description="EGF-like 2; calcium-binding" evidence="3">
    <location>
        <begin position="108"/>
        <end position="144"/>
    </location>
</feature>
<feature type="domain" description="EGF-like 3; calcium-binding" evidence="3">
    <location>
        <begin position="146"/>
        <end position="182"/>
    </location>
</feature>
<feature type="domain" description="EGF-like 4; calcium-binding" evidence="3">
    <location>
        <begin position="184"/>
        <end position="221"/>
    </location>
</feature>
<feature type="domain" description="EGF-like 5" evidence="3">
    <location>
        <begin position="223"/>
        <end position="259"/>
    </location>
</feature>
<feature type="domain" description="EGF-like 6" evidence="3">
    <location>
        <begin position="261"/>
        <end position="318"/>
    </location>
</feature>
<feature type="domain" description="EGF-like 7; calcium-binding" evidence="3">
    <location>
        <begin position="320"/>
        <end position="356"/>
    </location>
</feature>
<feature type="domain" description="EGF-like 8; calcium-binding" evidence="3">
    <location>
        <begin position="358"/>
        <end position="394"/>
    </location>
</feature>
<feature type="domain" description="EGF-like 9" evidence="3">
    <location>
        <begin position="396"/>
        <end position="436"/>
    </location>
</feature>
<feature type="domain" description="Laminin G-like 1" evidence="4">
    <location>
        <begin position="431"/>
        <end position="603"/>
    </location>
</feature>
<feature type="domain" description="EGF-like 10" evidence="3">
    <location>
        <begin position="605"/>
        <end position="641"/>
    </location>
</feature>
<feature type="domain" description="Laminin G-like 2" evidence="4">
    <location>
        <begin position="647"/>
        <end position="805"/>
    </location>
</feature>
<feature type="domain" description="EGF-like 11" evidence="3">
    <location>
        <begin position="807"/>
        <end position="843"/>
    </location>
</feature>
<feature type="domain" description="Laminin G-like 3" evidence="4">
    <location>
        <begin position="871"/>
        <end position="1054"/>
    </location>
</feature>
<feature type="domain" description="EGF-like 12" evidence="3">
    <location>
        <begin position="1056"/>
        <end position="1092"/>
    </location>
</feature>
<feature type="domain" description="EGF-like 13" evidence="3">
    <location>
        <begin position="1094"/>
        <end position="1130"/>
    </location>
</feature>
<feature type="domain" description="EGF-like 14" evidence="3">
    <location>
        <begin position="1134"/>
        <end position="1171"/>
    </location>
</feature>
<feature type="domain" description="EGF-like 15" evidence="3">
    <location>
        <begin position="1173"/>
        <end position="1209"/>
    </location>
</feature>
<feature type="region of interest" description="Required for maximum inhibition of APP amyloid-beta peptide secretion" evidence="8">
    <location>
        <begin position="1"/>
        <end position="350"/>
    </location>
</feature>
<feature type="region of interest" description="Interaction with EPB41L5" evidence="7">
    <location>
        <begin position="1249"/>
        <end position="1285"/>
    </location>
</feature>
<feature type="glycosylation site" description="N-linked (GlcNAc...) asparagine" evidence="2">
    <location>
        <position position="235"/>
    </location>
</feature>
<feature type="glycosylation site" description="O-linked (Glc...) serine" evidence="1">
    <location>
        <position position="267"/>
    </location>
</feature>
<feature type="glycosylation site" description="N-linked (GlcNAc...) asparagine" evidence="2">
    <location>
        <position position="438"/>
    </location>
</feature>
<feature type="glycosylation site" description="N-linked (GlcNAc...) asparagine" evidence="2">
    <location>
        <position position="478"/>
    </location>
</feature>
<feature type="glycosylation site" description="N-linked (GlcNAc...) asparagine" evidence="2">
    <location>
        <position position="669"/>
    </location>
</feature>
<feature type="glycosylation site" description="N-linked (GlcNAc...) asparagine" evidence="2">
    <location>
        <position position="690"/>
    </location>
</feature>
<feature type="glycosylation site" description="N-linked (GlcNAc...) asparagine" evidence="2">
    <location>
        <position position="786"/>
    </location>
</feature>
<feature type="glycosylation site" description="N-linked (GlcNAc...) asparagine" evidence="2">
    <location>
        <position position="800"/>
    </location>
</feature>
<feature type="glycosylation site" description="N-linked (GlcNAc...) asparagine" evidence="2">
    <location>
        <position position="836"/>
    </location>
</feature>
<feature type="glycosylation site" description="N-linked (GlcNAc...) asparagine" evidence="2">
    <location>
        <position position="886"/>
    </location>
</feature>
<feature type="glycosylation site" description="N-linked (GlcNAc...) asparagine" evidence="2">
    <location>
        <position position="926"/>
    </location>
</feature>
<feature type="glycosylation site" description="N-linked (GlcNAc...) asparagine" evidence="2">
    <location>
        <position position="1009"/>
    </location>
</feature>
<feature type="glycosylation site" description="N-linked (GlcNAc...) asparagine" evidence="2">
    <location>
        <position position="1141"/>
    </location>
</feature>
<feature type="glycosylation site" description="N-linked (GlcNAc...) asparagine" evidence="2">
    <location>
        <position position="1158"/>
    </location>
</feature>
<feature type="disulfide bond" evidence="3">
    <location>
        <begin position="71"/>
        <end position="82"/>
    </location>
</feature>
<feature type="disulfide bond" evidence="3">
    <location>
        <begin position="76"/>
        <end position="94"/>
    </location>
</feature>
<feature type="disulfide bond" evidence="3">
    <location>
        <begin position="96"/>
        <end position="105"/>
    </location>
</feature>
<feature type="disulfide bond" evidence="3">
    <location>
        <begin position="112"/>
        <end position="123"/>
    </location>
</feature>
<feature type="disulfide bond" evidence="3">
    <location>
        <begin position="117"/>
        <end position="132"/>
    </location>
</feature>
<feature type="disulfide bond" evidence="3">
    <location>
        <begin position="134"/>
        <end position="143"/>
    </location>
</feature>
<feature type="disulfide bond" evidence="3">
    <location>
        <begin position="150"/>
        <end position="161"/>
    </location>
</feature>
<feature type="disulfide bond" evidence="3">
    <location>
        <begin position="155"/>
        <end position="170"/>
    </location>
</feature>
<feature type="disulfide bond" evidence="3">
    <location>
        <begin position="172"/>
        <end position="181"/>
    </location>
</feature>
<feature type="disulfide bond" evidence="3">
    <location>
        <begin position="188"/>
        <end position="199"/>
    </location>
</feature>
<feature type="disulfide bond" evidence="3">
    <location>
        <begin position="193"/>
        <end position="208"/>
    </location>
</feature>
<feature type="disulfide bond" evidence="3">
    <location>
        <begin position="210"/>
        <end position="220"/>
    </location>
</feature>
<feature type="disulfide bond" evidence="3">
    <location>
        <begin position="227"/>
        <end position="238"/>
    </location>
</feature>
<feature type="disulfide bond" evidence="3">
    <location>
        <begin position="232"/>
        <end position="247"/>
    </location>
</feature>
<feature type="disulfide bond" evidence="3">
    <location>
        <begin position="249"/>
        <end position="258"/>
    </location>
</feature>
<feature type="disulfide bond" evidence="3">
    <location>
        <begin position="265"/>
        <end position="276"/>
    </location>
</feature>
<feature type="disulfide bond" evidence="3">
    <location>
        <begin position="270"/>
        <end position="306"/>
    </location>
</feature>
<feature type="disulfide bond" evidence="3">
    <location>
        <begin position="308"/>
        <end position="317"/>
    </location>
</feature>
<feature type="disulfide bond" evidence="3">
    <location>
        <begin position="324"/>
        <end position="335"/>
    </location>
</feature>
<feature type="disulfide bond" evidence="3">
    <location>
        <begin position="329"/>
        <end position="344"/>
    </location>
</feature>
<feature type="disulfide bond" evidence="3">
    <location>
        <begin position="346"/>
        <end position="355"/>
    </location>
</feature>
<feature type="disulfide bond" evidence="3">
    <location>
        <begin position="362"/>
        <end position="373"/>
    </location>
</feature>
<feature type="disulfide bond" evidence="3">
    <location>
        <begin position="367"/>
        <end position="382"/>
    </location>
</feature>
<feature type="disulfide bond" evidence="3">
    <location>
        <begin position="384"/>
        <end position="393"/>
    </location>
</feature>
<feature type="disulfide bond" evidence="3">
    <location>
        <begin position="400"/>
        <end position="411"/>
    </location>
</feature>
<feature type="disulfide bond" evidence="3">
    <location>
        <begin position="405"/>
        <end position="424"/>
    </location>
</feature>
<feature type="disulfide bond" evidence="3">
    <location>
        <begin position="426"/>
        <end position="435"/>
    </location>
</feature>
<feature type="disulfide bond" evidence="4">
    <location>
        <begin position="579"/>
        <end position="603"/>
    </location>
</feature>
<feature type="disulfide bond" evidence="3">
    <location>
        <begin position="609"/>
        <end position="620"/>
    </location>
</feature>
<feature type="disulfide bond" evidence="3">
    <location>
        <begin position="614"/>
        <end position="629"/>
    </location>
</feature>
<feature type="disulfide bond" evidence="3">
    <location>
        <begin position="631"/>
        <end position="640"/>
    </location>
</feature>
<feature type="disulfide bond" evidence="4">
    <location>
        <begin position="766"/>
        <end position="805"/>
    </location>
</feature>
<feature type="disulfide bond" evidence="3">
    <location>
        <begin position="811"/>
        <end position="822"/>
    </location>
</feature>
<feature type="disulfide bond" evidence="3">
    <location>
        <begin position="816"/>
        <end position="831"/>
    </location>
</feature>
<feature type="disulfide bond" evidence="3">
    <location>
        <begin position="833"/>
        <end position="842"/>
    </location>
</feature>
<feature type="disulfide bond" evidence="4">
    <location>
        <begin position="1013"/>
        <end position="1054"/>
    </location>
</feature>
<feature type="disulfide bond" evidence="3">
    <location>
        <begin position="1060"/>
        <end position="1071"/>
    </location>
</feature>
<feature type="disulfide bond" evidence="3">
    <location>
        <begin position="1065"/>
        <end position="1080"/>
    </location>
</feature>
<feature type="disulfide bond" evidence="3">
    <location>
        <begin position="1082"/>
        <end position="1091"/>
    </location>
</feature>
<feature type="disulfide bond" evidence="3">
    <location>
        <begin position="1098"/>
        <end position="1108"/>
    </location>
</feature>
<feature type="disulfide bond" evidence="3">
    <location>
        <begin position="1103"/>
        <end position="1118"/>
    </location>
</feature>
<feature type="disulfide bond" evidence="3">
    <location>
        <begin position="1120"/>
        <end position="1129"/>
    </location>
</feature>
<feature type="disulfide bond" evidence="3">
    <location>
        <begin position="1138"/>
        <end position="1150"/>
    </location>
</feature>
<feature type="disulfide bond" evidence="3">
    <location>
        <begin position="1144"/>
        <end position="1159"/>
    </location>
</feature>
<feature type="disulfide bond" evidence="3">
    <location>
        <begin position="1161"/>
        <end position="1170"/>
    </location>
</feature>
<feature type="disulfide bond" evidence="3">
    <location>
        <begin position="1177"/>
        <end position="1188"/>
    </location>
</feature>
<feature type="disulfide bond" evidence="3">
    <location>
        <begin position="1182"/>
        <end position="1197"/>
    </location>
</feature>
<feature type="disulfide bond" evidence="3">
    <location>
        <begin position="1199"/>
        <end position="1208"/>
    </location>
</feature>
<feature type="splice variant" id="VSP_014737" description="In isoform 3." evidence="18">
    <location>
        <begin position="1"/>
        <end position="332"/>
    </location>
</feature>
<feature type="splice variant" id="VSP_014738" description="In isoform 3." evidence="18">
    <original>GHCQDLPNGFQCHCPDGYA</original>
    <variation>MAMEPGALWTFLGHLWLLA</variation>
    <location>
        <begin position="333"/>
        <end position="351"/>
    </location>
</feature>
<feature type="splice variant" id="VSP_014739" description="In isoform 2." evidence="18">
    <original>LPVPSKECSLNVTCLDGSPCEGGSPAANCSCLEGLAGQRCQVPTLP</original>
    <variation>WDGWAGGWAANAPWGYGGAEKSARSVDESLPFPGPHVLICDMRRTV</variation>
    <location>
        <begin position="1131"/>
        <end position="1176"/>
    </location>
</feature>
<feature type="splice variant" id="VSP_014740" description="In isoform 2." evidence="18">
    <location>
        <begin position="1177"/>
        <end position="1285"/>
    </location>
</feature>
<feature type="sequence variant" id="VAR_022984" description="In dbSNP:rs73571404." evidence="6">
    <original>P</original>
    <variation>L</variation>
    <location>
        <position position="46"/>
    </location>
</feature>
<feature type="sequence variant" id="VAR_048974" description="In dbSNP:rs2808415." evidence="5">
    <original>T</original>
    <variation>N</variation>
    <location>
        <position position="90"/>
    </location>
</feature>
<feature type="sequence variant" id="VAR_022985" evidence="6">
    <original>V</original>
    <variation>L</variation>
    <location>
        <position position="97"/>
    </location>
</feature>
<feature type="sequence variant" id="VAR_022986" description="In dbSNP:rs542211566." evidence="6">
    <original>P</original>
    <variation>L</variation>
    <location>
        <position position="116"/>
    </location>
</feature>
<feature type="sequence variant" id="VAR_022987" description="In dbSNP:rs1105223." evidence="5 6">
    <original>M</original>
    <variation>T</variation>
    <location>
        <position position="145"/>
    </location>
</feature>
<feature type="sequence variant" id="VAR_084122" description="In FSGS9; uncertain significance." evidence="15">
    <location>
        <begin position="149"/>
        <end position="1285"/>
    </location>
</feature>
<feature type="sequence variant" id="VAR_022988" description="In dbSNP:rs1105222." evidence="5 6">
    <original>G</original>
    <variation>A</variation>
    <location>
        <position position="159"/>
    </location>
</feature>
<feature type="sequence variant" id="VAR_022989" evidence="6">
    <original>E</original>
    <variation>D</variation>
    <location>
        <position position="187"/>
    </location>
</feature>
<feature type="sequence variant" id="VAR_022990" description="In dbSNP:rs199679542." evidence="6">
    <original>A</original>
    <variation>T</variation>
    <location>
        <position position="351"/>
    </location>
</feature>
<feature type="sequence variant" id="VAR_084123" description="In FSGS9; when associated in cis with A-1076; uncertain significance; dbSNP:rs144803819." evidence="12">
    <original>W</original>
    <variation>C</variation>
    <location>
        <position position="498"/>
    </location>
</feature>
<feature type="sequence variant" id="VAR_022991" description="In dbSNP:rs370059953." evidence="6">
    <original>R</original>
    <variation>Q</variation>
    <location>
        <position position="534"/>
    </location>
</feature>
<feature type="sequence variant" id="VAR_022992" description="In dbSNP:rs145286619." evidence="6">
    <original>R</original>
    <variation>W</variation>
    <location>
        <position position="610"/>
    </location>
</feature>
<feature type="sequence variant" id="VAR_073266" description="In FSGS9; loss of function mutation; dbSNP:rs879255250." evidence="9">
    <original>C</original>
    <variation>S</variation>
    <location>
        <position position="620"/>
    </location>
</feature>
<feature type="sequence variant" id="VAR_073267" description="In FSGS9; dbSNP:rs202128397." evidence="9 14">
    <original>R</original>
    <variation>C</variation>
    <location>
        <position position="628"/>
    </location>
</feature>
<feature type="sequence variant" id="VAR_073268" description="In FSGS9; moderate loss of function mutation; dbSNP:rs879255252." evidence="9">
    <original>C</original>
    <variation>S</variation>
    <location>
        <position position="629"/>
    </location>
</feature>
<feature type="sequence variant" id="VAR_073269" description="In VMCKD; dbSNP:rs730880377." evidence="10">
    <original>R</original>
    <variation>W</variation>
    <location>
        <position position="633"/>
    </location>
</feature>
<feature type="sequence variant" id="VAR_073270" description="In VMCKD and FSGS9; uncertain significance; dbSNP:rs730880300." evidence="10 12">
    <original>E</original>
    <variation>A</variation>
    <location>
        <position position="643"/>
    </location>
</feature>
<feature type="sequence variant" id="VAR_084124" description="In VMCKD; uncertain significance; dbSNP:rs372093386." evidence="17">
    <original>A</original>
    <variation>P</variation>
    <location>
        <position position="654"/>
    </location>
</feature>
<feature type="sequence variant" id="VAR_061153" description="In dbSNP:rs2488602." evidence="5 6">
    <original>V</original>
    <variation>A</variation>
    <location>
        <position position="709"/>
    </location>
</feature>
<feature type="sequence variant" id="VAR_022993" description="In dbSNP:rs757353722." evidence="6">
    <original>H</original>
    <variation>Q</variation>
    <location>
        <position position="746"/>
    </location>
</feature>
<feature type="sequence variant" id="VAR_084125" description="In VMCKD; uncertain significance." evidence="10">
    <location>
        <begin position="760"/>
        <end position="1285"/>
    </location>
</feature>
<feature type="sequence variant" id="VAR_073271" description="In VMCKD and FSGS9; uncertain significancence; dbSNP:rs765676223." evidence="10 11 12">
    <original>N</original>
    <variation>K</variation>
    <location>
        <position position="800"/>
    </location>
</feature>
<feature type="sequence variant" id="VAR_084126" description="In FSGS9; uncertain significance." evidence="14">
    <original>G</original>
    <variation>W</variation>
    <location>
        <position position="839"/>
    </location>
</feature>
<feature type="sequence variant" id="VAR_084127" description="In FSGS9; when associated in cis with S-1064; uncertain significance; dbSNP:rs1463148582." evidence="15">
    <original>T</original>
    <variation>M</variation>
    <location>
        <position position="902"/>
    </location>
</feature>
<feature type="sequence variant" id="VAR_084128" description="In FSGS9; when associated in cis with M-902; uncertain significance; dbSNP:rs868484209." evidence="15">
    <original>P</original>
    <variation>S</variation>
    <location>
        <position position="1064"/>
    </location>
</feature>
<feature type="sequence variant" id="VAR_084129" description="In FSGS9; when associated in cis with C-498; uncertain significance." evidence="12">
    <original>D</original>
    <variation>A</variation>
    <location>
        <position position="1076"/>
    </location>
</feature>
<feature type="sequence variant" id="VAR_022994" description="In dbSNP:rs73571431." evidence="6">
    <original>T</original>
    <variation>M</variation>
    <location>
        <position position="1110"/>
    </location>
</feature>
<feature type="sequence variant" id="VAR_084131" description="In FSGS9; uncertain significance; dbSNP:rs1219047251." evidence="12">
    <original>R</original>
    <variation>C</variation>
    <location>
        <position position="1115"/>
    </location>
</feature>
<feature type="sequence variant" id="VAR_084132" description="In FSGS9; uncertain significance." evidence="12">
    <original>C</original>
    <variation>R</variation>
    <location>
        <position position="1129"/>
    </location>
</feature>
<feature type="sequence variant" id="VAR_084133" description="In FSGS9; uncertain significance." evidence="13">
    <original>N</original>
    <variation>T</variation>
    <location>
        <position position="1184"/>
    </location>
</feature>
<feature type="sequence variant" id="VAR_084134" description="In RP; uncertain significance; reduces protein stability and expression." evidence="16">
    <original>R</original>
    <variation>G</variation>
    <location>
        <position position="1249"/>
    </location>
</feature>
<feature type="sequence variant" id="VAR_073272" description="In FSGS9; dbSNP:rs147412276." evidence="9">
    <original>R</original>
    <variation>Q</variation>
    <location>
        <position position="1249"/>
    </location>
</feature>
<feature type="mutagenesis site" description="No effect on secretion of APP amyloid-beta peptide 40 and amyloid-beta peptide 42; when associated with P-1260 and E-1264." evidence="8">
    <original>Y</original>
    <variation>A</variation>
    <location>
        <position position="1258"/>
    </location>
</feature>
<feature type="mutagenesis site" description="No effect on secretion of APP amyloid-beta peptide 40 and amyloid-beta peptide 42; when associated with Y-1258 and E-1264." evidence="8">
    <original>P</original>
    <variation>A</variation>
    <location>
        <position position="1260"/>
    </location>
</feature>
<feature type="mutagenesis site" description="No effect on secretion of APP amyloid-beta peptide 40 and amyloid-beta peptide 42; when associated with Y-1258 and P-1260." evidence="8">
    <original>E</original>
    <variation>A</variation>
    <location>
        <position position="1264"/>
    </location>
</feature>
<feature type="sequence conflict" description="In Ref. 2; BAC86684." evidence="19" ref="2">
    <original>T</original>
    <variation>A</variation>
    <location>
        <position position="430"/>
    </location>
</feature>
<feature type="sequence conflict" description="In Ref. 2; AK123000/BAC86684." evidence="19" ref="2">
    <original>T</original>
    <variation>A</variation>
    <location>
        <position position="969"/>
    </location>
</feature>
<feature type="sequence conflict" description="In Ref. 2; BAC86684." evidence="19" ref="2">
    <original>G</original>
    <variation>R</variation>
    <location>
        <position position="1153"/>
    </location>
</feature>
<feature type="sequence conflict" description="In Ref. 2; BAC86684." evidence="19" ref="2">
    <location>
        <position position="1239"/>
    </location>
</feature>